<name>IGA2_HUMAN</name>
<accession>P0DOX2</accession>
<feature type="chain" id="PRO_0000439283" description="Immunoglobulin alpha-2 heavy chain">
    <location>
        <begin position="1"/>
        <end position="455"/>
    </location>
</feature>
<feature type="domain" description="Ig-like 1" evidence="1">
    <location>
        <begin position="1"/>
        <end position="95"/>
    </location>
</feature>
<feature type="domain" description="Ig-like 2" evidence="1">
    <location>
        <begin position="121"/>
        <end position="213"/>
    </location>
</feature>
<feature type="domain" description="Ig-like 3" evidence="1">
    <location>
        <begin position="227"/>
        <end position="322"/>
    </location>
</feature>
<feature type="domain" description="Ig-like 4" evidence="1">
    <location>
        <begin position="330"/>
        <end position="432"/>
    </location>
</feature>
<feature type="region of interest" description="Variable (V) domain, involved in antigen recognition" evidence="9">
    <location>
        <begin position="1"/>
        <end position="115"/>
    </location>
</feature>
<feature type="region of interest" description="Constant (C) domain" evidence="9">
    <location>
        <begin position="116"/>
        <end position="455"/>
    </location>
</feature>
<feature type="glycosylation site" description="N-linked (GlcNAc...) asparagine" evidence="2">
    <location>
        <position position="162"/>
    </location>
</feature>
<feature type="glycosylation site" description="N-linked (GlcNAc...) asparagine" evidence="2">
    <location>
        <position position="207"/>
    </location>
</feature>
<feature type="glycosylation site" description="N-linked (GlcNAc...) asparagine" evidence="2">
    <location>
        <position position="246"/>
    </location>
</feature>
<feature type="glycosylation site" description="N-linked (GlcNAc...) asparagine" evidence="2">
    <location>
        <position position="320"/>
    </location>
</feature>
<feature type="glycosylation site" description="N-linked (GlcNAc...) asparagine" evidence="2">
    <location>
        <position position="442"/>
    </location>
</feature>
<feature type="disulfide bond" evidence="1 7">
    <location>
        <begin position="22"/>
        <end position="95"/>
    </location>
</feature>
<feature type="disulfide bond" evidence="1 7">
    <location>
        <begin position="141"/>
        <end position="200"/>
    </location>
</feature>
<feature type="disulfide bond" description="Interchain (with light chain)" evidence="7">
    <location>
        <position position="216"/>
    </location>
</feature>
<feature type="disulfide bond" description="Interchain (with heavy chain)" evidence="7">
    <location>
        <position position="224"/>
    </location>
</feature>
<feature type="disulfide bond" evidence="7">
    <location>
        <begin position="225"/>
        <end position="282"/>
    </location>
</feature>
<feature type="disulfide bond" evidence="1 7">
    <location>
        <begin position="249"/>
        <end position="306"/>
    </location>
</feature>
<feature type="disulfide bond" description="Interchain (with heavy chain)" evidence="7">
    <location>
        <position position="284"/>
    </location>
</feature>
<feature type="disulfide bond" description="Interchain (with heavy chain of another subunit)" evidence="7">
    <location>
        <position position="294"/>
    </location>
</feature>
<feature type="disulfide bond" evidence="1 7">
    <location>
        <begin position="352"/>
        <end position="415"/>
    </location>
</feature>
<feature type="disulfide bond" description="Interchain (with J chain)" evidence="7">
    <location>
        <position position="454"/>
    </location>
</feature>
<reference key="1">
    <citation type="journal article" date="1978" name="Proc. Natl. Acad. Sci. U.S.A.">
        <title>Complete amino acid sequence of the alpha 2 heavy chain of a human IgA2 immunoglobulin of the A2m (2) allotype.</title>
        <authorList>
            <person name="Torano A."/>
            <person name="Putnam F.W."/>
        </authorList>
    </citation>
    <scope>PROTEIN SEQUENCE</scope>
    <scope>DISULFIDE BOND</scope>
</reference>
<reference key="2">
    <citation type="journal article" date="1977" name="Proc. Natl. Acad. Sci. U.S.A.">
        <title>Location and structural significance of the oligosaccharides in human Ig-A1 and IgA2 immunoglobulins.</title>
        <authorList>
            <person name="Torano A."/>
            <person name="Tsuzukida Y."/>
            <person name="Liu Y.S."/>
            <person name="Putnam F.W."/>
        </authorList>
    </citation>
    <scope>GLYCOSYLATION AT ASN-162; ASN-207 AND ASN-246 AND ASN-442</scope>
</reference>
<reference key="3">
    <citation type="journal article" date="1990" name="Biochem. J.">
        <title>The structure and function of human IgA.</title>
        <authorList>
            <person name="Kerr M.A."/>
        </authorList>
    </citation>
    <scope>REVIEW ON FUNCTION AND SUBUNIT</scope>
</reference>
<reference key="4">
    <citation type="journal article" date="2007" name="Annu. Rev. Genet.">
        <title>Immunoglobulin somatic hypermutation.</title>
        <authorList>
            <person name="Teng G."/>
            <person name="Papavasiliou F.N."/>
        </authorList>
    </citation>
    <scope>REVIEW ON SOMATIC HYPERMUTATION</scope>
</reference>
<reference key="5">
    <citation type="journal article" date="2010" name="J. Allergy Clin. Immunol.">
        <title>Structure and function of immunoglobulins.</title>
        <authorList>
            <person name="Schroeder H.W. Jr."/>
            <person name="Cavacini L."/>
        </authorList>
    </citation>
    <scope>REVIEW ON IMMUNOGLOBULINS</scope>
</reference>
<reference key="6">
    <citation type="journal article" date="2012" name="Nat. Rev. Immunol.">
        <title>Molecular programming of B cell memory.</title>
        <authorList>
            <person name="McHeyzer-Williams M."/>
            <person name="Okitsu S."/>
            <person name="Wang N."/>
            <person name="McHeyzer-Williams L."/>
        </authorList>
    </citation>
    <scope>REVIEW ON FUNCTION</scope>
</reference>
<organism>
    <name type="scientific">Homo sapiens</name>
    <name type="common">Human</name>
    <dbReference type="NCBI Taxonomy" id="9606"/>
    <lineage>
        <taxon>Eukaryota</taxon>
        <taxon>Metazoa</taxon>
        <taxon>Chordata</taxon>
        <taxon>Craniata</taxon>
        <taxon>Vertebrata</taxon>
        <taxon>Euteleostomi</taxon>
        <taxon>Mammalia</taxon>
        <taxon>Eutheria</taxon>
        <taxon>Euarchontoglires</taxon>
        <taxon>Primates</taxon>
        <taxon>Haplorrhini</taxon>
        <taxon>Catarrhini</taxon>
        <taxon>Hominidae</taxon>
        <taxon>Homo</taxon>
    </lineage>
</organism>
<protein>
    <recommendedName>
        <fullName evidence="8">Immunoglobulin alpha-2 heavy chain</fullName>
    </recommendedName>
    <alternativeName>
        <fullName evidence="9">Immunoglobulin alpha-2 heavy chain BUT</fullName>
    </alternativeName>
</protein>
<evidence type="ECO:0000255" key="1">
    <source>
        <dbReference type="PROSITE-ProRule" id="PRU00114"/>
    </source>
</evidence>
<evidence type="ECO:0000269" key="2">
    <source>
    </source>
</evidence>
<evidence type="ECO:0000303" key="3">
    <source>
    </source>
</evidence>
<evidence type="ECO:0000303" key="4">
    <source>
    </source>
</evidence>
<evidence type="ECO:0000303" key="5">
    <source>
    </source>
</evidence>
<evidence type="ECO:0000303" key="6">
    <source>
    </source>
</evidence>
<evidence type="ECO:0000303" key="7">
    <source>
    </source>
</evidence>
<evidence type="ECO:0000305" key="8"/>
<evidence type="ECO:0000305" key="9">
    <source>
    </source>
</evidence>
<sequence>EVQLVETGGGLIQPGGSLRLSCAASGFTVSNHSMSWVRQAPGKALEWVSAIYRGGTTYYADSVKGRFTISRDDSRNTVYLQMNSLRAEDTAVYYCARDLAAARLFGKGTTVTVSSASPTSPKVFPLSLDSTPQDGNVVVACLVQGFFPQEPLSVTWSESGQNVTARNFPPSQDASGDLYTTSSQLTLPATQCPDGKSVTCHVKHYTNSSQDVTVPCRVPPPPPCCHPRLSLHRPALEDLLLGSEANLTCTLTGLRDASGATFTWTPSSGKSAVEGPPERDLCGCYSVSSVLPGCAQPWNHGETFTCTAAHPELKTPLTANITKSGNTFRPEVHLLPPPSEELALNELVTLTCLARGFSPKDVLVRWLQGSQELPREKYLTWASRQEPSQGTTTYAVTSILRVAAEDWKKGETFSCMVGHEALPLAFTQKTIDRLAGKPTHINVSVVMAEADGTCY</sequence>
<comment type="function">
    <text evidence="3 4 5 6">Immunoglobulins, also known as antibodies, are membrane-bound or secreted glycoproteins produced by B lymphocytes. In the recognition phase of humoral immunity, the membrane-bound immunoglobulins serve as receptors which, upon binding of a specific antigen, trigger the clonal expansion and differentiation of B lymphocytes into immunoglobulins-secreting plasma cells. Secreted immunoglobulins mediate the effector phase of humoral immunity, which results in the elimination of bound antigens (PubMed:20176268, PubMed:22158414). The antigen binding site is formed by the variable domain of one heavy chain, together with that of its associated light chain. Thus, each immunoglobulin has two antigen binding sites with remarkable affinity for a particular antigen. The variable domains are assembled by a process called V-(D)-J rearrangement and can then be subjected to somatic hypermutations which, after exposure to antigen and selection, allow affinity maturation for a particular antigen (PubMed:17576170, PubMed:20176268). Ig alpha is the major immunoglobulin class in body secretions (PubMed:2241915).</text>
</comment>
<comment type="subunit">
    <text evidence="4 6">Immunoglobulins are composed of two identical heavy chains and two identical light chains; disulfide-linked (PubMed:20176268). Monomeric or polymeric (PubMed:2241915).</text>
</comment>
<comment type="subcellular location">
    <subcellularLocation>
        <location evidence="4 5">Secreted</location>
    </subcellularLocation>
    <subcellularLocation>
        <location evidence="4 5">Cell membrane</location>
    </subcellularLocation>
</comment>
<comment type="caution">
    <text evidence="8">This sequence is an example of a full-length immunoglobulin alpha-2 heavy chain.</text>
</comment>
<keyword id="KW-1064">Adaptive immunity</keyword>
<keyword id="KW-1003">Cell membrane</keyword>
<keyword id="KW-0903">Direct protein sequencing</keyword>
<keyword id="KW-1015">Disulfide bond</keyword>
<keyword id="KW-0325">Glycoprotein</keyword>
<keyword id="KW-0391">Immunity</keyword>
<keyword id="KW-1280">Immunoglobulin</keyword>
<keyword id="KW-0393">Immunoglobulin domain</keyword>
<keyword id="KW-0472">Membrane</keyword>
<keyword id="KW-0677">Repeat</keyword>
<keyword id="KW-0964">Secreted</keyword>
<dbReference type="SMR" id="P0DOX2"/>
<dbReference type="GlyConnect" id="2961">
    <property type="glycosylation" value="32 N-Linked glycans"/>
</dbReference>
<dbReference type="GlyConnect" id="2962">
    <property type="glycosylation" value="35 N-Linked glycans"/>
</dbReference>
<dbReference type="GlyConnect" id="2963">
    <property type="glycosylation" value="38 N-Linked glycans"/>
</dbReference>
<dbReference type="iPTMnet" id="P0DOX2"/>
<dbReference type="PhosphoSitePlus" id="P0DOX2"/>
<dbReference type="jPOST" id="P0DOX2"/>
<dbReference type="Pharos" id="P0DOX2">
    <property type="development level" value="Tdark"/>
</dbReference>
<dbReference type="GO" id="GO:0005576">
    <property type="term" value="C:extracellular region"/>
    <property type="evidence" value="ECO:0007669"/>
    <property type="project" value="UniProtKB-SubCell"/>
</dbReference>
<dbReference type="GO" id="GO:0019814">
    <property type="term" value="C:immunoglobulin complex"/>
    <property type="evidence" value="ECO:0007669"/>
    <property type="project" value="UniProtKB-KW"/>
</dbReference>
<dbReference type="GO" id="GO:0005886">
    <property type="term" value="C:plasma membrane"/>
    <property type="evidence" value="ECO:0007669"/>
    <property type="project" value="UniProtKB-SubCell"/>
</dbReference>
<dbReference type="GO" id="GO:0002250">
    <property type="term" value="P:adaptive immune response"/>
    <property type="evidence" value="ECO:0007669"/>
    <property type="project" value="UniProtKB-KW"/>
</dbReference>
<dbReference type="CDD" id="cd04986">
    <property type="entry name" value="IgC1_CH2_IgA"/>
    <property type="match status" value="1"/>
</dbReference>
<dbReference type="CDD" id="cd05768">
    <property type="entry name" value="IgC1_CH3_IgAGD_CH4_IgAEM"/>
    <property type="match status" value="1"/>
</dbReference>
<dbReference type="CDD" id="cd04981">
    <property type="entry name" value="IgV_H"/>
    <property type="match status" value="1"/>
</dbReference>
<dbReference type="FunFam" id="2.60.40.10:FF:002016">
    <property type="entry name" value="Immunoglobulin heavy constant alpha 2"/>
    <property type="match status" value="1"/>
</dbReference>
<dbReference type="FunFam" id="2.60.40.10:FF:000998">
    <property type="entry name" value="Immunoglobulin heavy constant epsilon"/>
    <property type="match status" value="1"/>
</dbReference>
<dbReference type="FunFam" id="2.60.40.10:FF:000463">
    <property type="entry name" value="Immunoglobulin heavy constant gamma 1"/>
    <property type="match status" value="1"/>
</dbReference>
<dbReference type="FunFam" id="2.60.40.10:FF:001142">
    <property type="entry name" value="Immunoglobulin heavy variable 5-15"/>
    <property type="match status" value="1"/>
</dbReference>
<dbReference type="Gene3D" id="2.60.40.10">
    <property type="entry name" value="Immunoglobulins"/>
    <property type="match status" value="4"/>
</dbReference>
<dbReference type="InterPro" id="IPR007110">
    <property type="entry name" value="Ig-like_dom"/>
</dbReference>
<dbReference type="InterPro" id="IPR036179">
    <property type="entry name" value="Ig-like_dom_sf"/>
</dbReference>
<dbReference type="InterPro" id="IPR013783">
    <property type="entry name" value="Ig-like_fold"/>
</dbReference>
<dbReference type="InterPro" id="IPR003006">
    <property type="entry name" value="Ig/MHC_CS"/>
</dbReference>
<dbReference type="InterPro" id="IPR003597">
    <property type="entry name" value="Ig_C1-set"/>
</dbReference>
<dbReference type="InterPro" id="IPR003599">
    <property type="entry name" value="Ig_sub"/>
</dbReference>
<dbReference type="InterPro" id="IPR013106">
    <property type="entry name" value="Ig_V-set"/>
</dbReference>
<dbReference type="InterPro" id="IPR050380">
    <property type="entry name" value="Immune_Resp_Modulators"/>
</dbReference>
<dbReference type="InterPro" id="IPR013151">
    <property type="entry name" value="Immunoglobulin_dom"/>
</dbReference>
<dbReference type="PANTHER" id="PTHR23411">
    <property type="entry name" value="TAPASIN"/>
    <property type="match status" value="1"/>
</dbReference>
<dbReference type="Pfam" id="PF07654">
    <property type="entry name" value="C1-set"/>
    <property type="match status" value="2"/>
</dbReference>
<dbReference type="Pfam" id="PF00047">
    <property type="entry name" value="ig"/>
    <property type="match status" value="1"/>
</dbReference>
<dbReference type="Pfam" id="PF07686">
    <property type="entry name" value="V-set"/>
    <property type="match status" value="1"/>
</dbReference>
<dbReference type="SMART" id="SM00409">
    <property type="entry name" value="IG"/>
    <property type="match status" value="4"/>
</dbReference>
<dbReference type="SMART" id="SM00407">
    <property type="entry name" value="IGc1"/>
    <property type="match status" value="3"/>
</dbReference>
<dbReference type="SMART" id="SM00406">
    <property type="entry name" value="IGv"/>
    <property type="match status" value="1"/>
</dbReference>
<dbReference type="SUPFAM" id="SSF48726">
    <property type="entry name" value="Immunoglobulin"/>
    <property type="match status" value="4"/>
</dbReference>
<dbReference type="PROSITE" id="PS50835">
    <property type="entry name" value="IG_LIKE"/>
    <property type="match status" value="4"/>
</dbReference>
<dbReference type="PROSITE" id="PS00290">
    <property type="entry name" value="IG_MHC"/>
    <property type="match status" value="2"/>
</dbReference>
<proteinExistence type="evidence at protein level"/>